<evidence type="ECO:0000255" key="1"/>
<evidence type="ECO:0000269" key="2">
    <source>
    </source>
</evidence>
<evidence type="ECO:0000305" key="3"/>
<gene>
    <name type="primary">C2orf69</name>
</gene>
<sequence>MWGFRLLRSPPLLLLLPQLGIGNASSCSQARTMNPGGSGGARCSLSAEVRRRQCLQLSTVPGADPQRSNELLLLAAAGEGLERQDLPGDPAKEEPQPPPQHHVLYFPGDVQNYHEIMTRHPENYQWENWSLENVATILAHRFPNSYIWVIKCSRMHLHKFSCYDNFVKSNMFGAPEHNTDFGAFKHLYMLLVNAFNLSQNSLSKKSLNVWNKDSIASNCRSSPSHTTNGCQGEKVRTCEKSDESAMSFYPPSLNDASFTLIGFSKGCVVLNQLLFELKEAKKDKNIDAFIKSIRTMYWLDGGHSGGSNTWVTYPEVLKEFAQTGIIVHTHVTPYQVRDPMRSWIGKEHKKFVQILGDLGMQVTSQIHFTKEAPSIENHFRVHEVF</sequence>
<dbReference type="EMBL" id="AK096292">
    <property type="protein sequence ID" value="BAC04749.1"/>
    <property type="molecule type" value="mRNA"/>
</dbReference>
<dbReference type="EMBL" id="AC097717">
    <property type="protein sequence ID" value="AAY24161.1"/>
    <property type="molecule type" value="Genomic_DNA"/>
</dbReference>
<dbReference type="EMBL" id="CH471063">
    <property type="protein sequence ID" value="EAW70190.1"/>
    <property type="status" value="ALT_SEQ"/>
    <property type="molecule type" value="Genomic_DNA"/>
</dbReference>
<dbReference type="EMBL" id="BC036456">
    <property type="protein sequence ID" value="AAH36456.1"/>
    <property type="molecule type" value="mRNA"/>
</dbReference>
<dbReference type="CCDS" id="CCDS46482.1"/>
<dbReference type="RefSeq" id="NP_710156.3">
    <property type="nucleotide sequence ID" value="NM_153689.5"/>
</dbReference>
<dbReference type="BioGRID" id="128495">
    <property type="interactions" value="7"/>
</dbReference>
<dbReference type="FunCoup" id="Q8N8R5">
    <property type="interactions" value="1898"/>
</dbReference>
<dbReference type="IntAct" id="Q8N8R5">
    <property type="interactions" value="8"/>
</dbReference>
<dbReference type="STRING" id="9606.ENSP00000312770"/>
<dbReference type="iPTMnet" id="Q8N8R5"/>
<dbReference type="PhosphoSitePlus" id="Q8N8R5"/>
<dbReference type="BioMuta" id="C2orf69"/>
<dbReference type="DMDM" id="74729509"/>
<dbReference type="jPOST" id="Q8N8R5"/>
<dbReference type="MassIVE" id="Q8N8R5"/>
<dbReference type="PaxDb" id="9606-ENSP00000312770"/>
<dbReference type="PeptideAtlas" id="Q8N8R5"/>
<dbReference type="ProteomicsDB" id="72455"/>
<dbReference type="Pumba" id="Q8N8R5"/>
<dbReference type="Antibodypedia" id="50407">
    <property type="antibodies" value="36 antibodies from 10 providers"/>
</dbReference>
<dbReference type="DNASU" id="205327"/>
<dbReference type="Ensembl" id="ENST00000319974.6">
    <property type="protein sequence ID" value="ENSP00000312770.5"/>
    <property type="gene ID" value="ENSG00000178074.6"/>
</dbReference>
<dbReference type="GeneID" id="205327"/>
<dbReference type="KEGG" id="hsa:205327"/>
<dbReference type="MANE-Select" id="ENST00000319974.6">
    <property type="protein sequence ID" value="ENSP00000312770.5"/>
    <property type="RefSeq nucleotide sequence ID" value="NM_153689.6"/>
    <property type="RefSeq protein sequence ID" value="NP_710156.3"/>
</dbReference>
<dbReference type="UCSC" id="uc010zhb.2">
    <property type="organism name" value="human"/>
</dbReference>
<dbReference type="AGR" id="HGNC:26799"/>
<dbReference type="CTD" id="205327"/>
<dbReference type="DisGeNET" id="205327"/>
<dbReference type="GeneCards" id="C2orf69"/>
<dbReference type="HGNC" id="HGNC:26799">
    <property type="gene designation" value="C2orf69"/>
</dbReference>
<dbReference type="HPA" id="ENSG00000178074">
    <property type="expression patterns" value="Low tissue specificity"/>
</dbReference>
<dbReference type="MalaCards" id="C2orf69"/>
<dbReference type="MIM" id="619219">
    <property type="type" value="gene"/>
</dbReference>
<dbReference type="MIM" id="619423">
    <property type="type" value="phenotype"/>
</dbReference>
<dbReference type="neXtProt" id="NX_Q8N8R5"/>
<dbReference type="OpenTargets" id="ENSG00000178074"/>
<dbReference type="PharmGKB" id="PA162379487"/>
<dbReference type="VEuPathDB" id="HostDB:ENSG00000178074"/>
<dbReference type="eggNOG" id="KOG2800">
    <property type="taxonomic scope" value="Eukaryota"/>
</dbReference>
<dbReference type="GeneTree" id="ENSGT00390000005550"/>
<dbReference type="HOGENOM" id="CLU_028841_1_0_1"/>
<dbReference type="InParanoid" id="Q8N8R5"/>
<dbReference type="OMA" id="DIMSCHP"/>
<dbReference type="OrthoDB" id="419333at2759"/>
<dbReference type="PAN-GO" id="Q8N8R5">
    <property type="GO annotations" value="1 GO annotation based on evolutionary models"/>
</dbReference>
<dbReference type="PhylomeDB" id="Q8N8R5"/>
<dbReference type="TreeFam" id="TF343859"/>
<dbReference type="PathwayCommons" id="Q8N8R5"/>
<dbReference type="SignaLink" id="Q8N8R5"/>
<dbReference type="BioGRID-ORCS" id="205327">
    <property type="hits" value="22 hits in 1153 CRISPR screens"/>
</dbReference>
<dbReference type="ChiTaRS" id="C2orf69">
    <property type="organism name" value="human"/>
</dbReference>
<dbReference type="GenomeRNAi" id="205327"/>
<dbReference type="Pharos" id="Q8N8R5">
    <property type="development level" value="Tdark"/>
</dbReference>
<dbReference type="PRO" id="PR:Q8N8R5"/>
<dbReference type="Proteomes" id="UP000005640">
    <property type="component" value="Chromosome 2"/>
</dbReference>
<dbReference type="RNAct" id="Q8N8R5">
    <property type="molecule type" value="protein"/>
</dbReference>
<dbReference type="Bgee" id="ENSG00000178074">
    <property type="expression patterns" value="Expressed in sperm and 195 other cell types or tissues"/>
</dbReference>
<dbReference type="GO" id="GO:0005759">
    <property type="term" value="C:mitochondrial matrix"/>
    <property type="evidence" value="ECO:0007669"/>
    <property type="project" value="UniProtKB-SubCell"/>
</dbReference>
<dbReference type="GO" id="GO:0005739">
    <property type="term" value="C:mitochondrion"/>
    <property type="evidence" value="ECO:0000314"/>
    <property type="project" value="UniProtKB"/>
</dbReference>
<dbReference type="GO" id="GO:0006119">
    <property type="term" value="P:oxidative phosphorylation"/>
    <property type="evidence" value="ECO:0000315"/>
    <property type="project" value="UniProtKB"/>
</dbReference>
<dbReference type="InterPro" id="IPR018881">
    <property type="entry name" value="C2orf69_mit"/>
</dbReference>
<dbReference type="PANTHER" id="PTHR31296:SF1">
    <property type="entry name" value="MITOCHONDRIAL PROTEIN C2ORF69"/>
    <property type="match status" value="1"/>
</dbReference>
<dbReference type="PANTHER" id="PTHR31296">
    <property type="entry name" value="UPF0565 PROTEIN C2ORF69"/>
    <property type="match status" value="1"/>
</dbReference>
<dbReference type="Pfam" id="PF10561">
    <property type="entry name" value="C2orf69"/>
    <property type="match status" value="1"/>
</dbReference>
<organism>
    <name type="scientific">Homo sapiens</name>
    <name type="common">Human</name>
    <dbReference type="NCBI Taxonomy" id="9606"/>
    <lineage>
        <taxon>Eukaryota</taxon>
        <taxon>Metazoa</taxon>
        <taxon>Chordata</taxon>
        <taxon>Craniata</taxon>
        <taxon>Vertebrata</taxon>
        <taxon>Euteleostomi</taxon>
        <taxon>Mammalia</taxon>
        <taxon>Eutheria</taxon>
        <taxon>Euarchontoglires</taxon>
        <taxon>Primates</taxon>
        <taxon>Haplorrhini</taxon>
        <taxon>Catarrhini</taxon>
        <taxon>Hominidae</taxon>
        <taxon>Homo</taxon>
    </lineage>
</organism>
<protein>
    <recommendedName>
        <fullName>Mitochondrial protein C2orf69</fullName>
    </recommendedName>
</protein>
<reference key="1">
    <citation type="journal article" date="2004" name="Nat. Genet.">
        <title>Complete sequencing and characterization of 21,243 full-length human cDNAs.</title>
        <authorList>
            <person name="Ota T."/>
            <person name="Suzuki Y."/>
            <person name="Nishikawa T."/>
            <person name="Otsuki T."/>
            <person name="Sugiyama T."/>
            <person name="Irie R."/>
            <person name="Wakamatsu A."/>
            <person name="Hayashi K."/>
            <person name="Sato H."/>
            <person name="Nagai K."/>
            <person name="Kimura K."/>
            <person name="Makita H."/>
            <person name="Sekine M."/>
            <person name="Obayashi M."/>
            <person name="Nishi T."/>
            <person name="Shibahara T."/>
            <person name="Tanaka T."/>
            <person name="Ishii S."/>
            <person name="Yamamoto J."/>
            <person name="Saito K."/>
            <person name="Kawai Y."/>
            <person name="Isono Y."/>
            <person name="Nakamura Y."/>
            <person name="Nagahari K."/>
            <person name="Murakami K."/>
            <person name="Yasuda T."/>
            <person name="Iwayanagi T."/>
            <person name="Wagatsuma M."/>
            <person name="Shiratori A."/>
            <person name="Sudo H."/>
            <person name="Hosoiri T."/>
            <person name="Kaku Y."/>
            <person name="Kodaira H."/>
            <person name="Kondo H."/>
            <person name="Sugawara M."/>
            <person name="Takahashi M."/>
            <person name="Kanda K."/>
            <person name="Yokoi T."/>
            <person name="Furuya T."/>
            <person name="Kikkawa E."/>
            <person name="Omura Y."/>
            <person name="Abe K."/>
            <person name="Kamihara K."/>
            <person name="Katsuta N."/>
            <person name="Sato K."/>
            <person name="Tanikawa M."/>
            <person name="Yamazaki M."/>
            <person name="Ninomiya K."/>
            <person name="Ishibashi T."/>
            <person name="Yamashita H."/>
            <person name="Murakawa K."/>
            <person name="Fujimori K."/>
            <person name="Tanai H."/>
            <person name="Kimata M."/>
            <person name="Watanabe M."/>
            <person name="Hiraoka S."/>
            <person name="Chiba Y."/>
            <person name="Ishida S."/>
            <person name="Ono Y."/>
            <person name="Takiguchi S."/>
            <person name="Watanabe S."/>
            <person name="Yosida M."/>
            <person name="Hotuta T."/>
            <person name="Kusano J."/>
            <person name="Kanehori K."/>
            <person name="Takahashi-Fujii A."/>
            <person name="Hara H."/>
            <person name="Tanase T.-O."/>
            <person name="Nomura Y."/>
            <person name="Togiya S."/>
            <person name="Komai F."/>
            <person name="Hara R."/>
            <person name="Takeuchi K."/>
            <person name="Arita M."/>
            <person name="Imose N."/>
            <person name="Musashino K."/>
            <person name="Yuuki H."/>
            <person name="Oshima A."/>
            <person name="Sasaki N."/>
            <person name="Aotsuka S."/>
            <person name="Yoshikawa Y."/>
            <person name="Matsunawa H."/>
            <person name="Ichihara T."/>
            <person name="Shiohata N."/>
            <person name="Sano S."/>
            <person name="Moriya S."/>
            <person name="Momiyama H."/>
            <person name="Satoh N."/>
            <person name="Takami S."/>
            <person name="Terashima Y."/>
            <person name="Suzuki O."/>
            <person name="Nakagawa S."/>
            <person name="Senoh A."/>
            <person name="Mizoguchi H."/>
            <person name="Goto Y."/>
            <person name="Shimizu F."/>
            <person name="Wakebe H."/>
            <person name="Hishigaki H."/>
            <person name="Watanabe T."/>
            <person name="Sugiyama A."/>
            <person name="Takemoto M."/>
            <person name="Kawakami B."/>
            <person name="Yamazaki M."/>
            <person name="Watanabe K."/>
            <person name="Kumagai A."/>
            <person name="Itakura S."/>
            <person name="Fukuzumi Y."/>
            <person name="Fujimori Y."/>
            <person name="Komiyama M."/>
            <person name="Tashiro H."/>
            <person name="Tanigami A."/>
            <person name="Fujiwara T."/>
            <person name="Ono T."/>
            <person name="Yamada K."/>
            <person name="Fujii Y."/>
            <person name="Ozaki K."/>
            <person name="Hirao M."/>
            <person name="Ohmori Y."/>
            <person name="Kawabata A."/>
            <person name="Hikiji T."/>
            <person name="Kobatake N."/>
            <person name="Inagaki H."/>
            <person name="Ikema Y."/>
            <person name="Okamoto S."/>
            <person name="Okitani R."/>
            <person name="Kawakami T."/>
            <person name="Noguchi S."/>
            <person name="Itoh T."/>
            <person name="Shigeta K."/>
            <person name="Senba T."/>
            <person name="Matsumura K."/>
            <person name="Nakajima Y."/>
            <person name="Mizuno T."/>
            <person name="Morinaga M."/>
            <person name="Sasaki M."/>
            <person name="Togashi T."/>
            <person name="Oyama M."/>
            <person name="Hata H."/>
            <person name="Watanabe M."/>
            <person name="Komatsu T."/>
            <person name="Mizushima-Sugano J."/>
            <person name="Satoh T."/>
            <person name="Shirai Y."/>
            <person name="Takahashi Y."/>
            <person name="Nakagawa K."/>
            <person name="Okumura K."/>
            <person name="Nagase T."/>
            <person name="Nomura N."/>
            <person name="Kikuchi H."/>
            <person name="Masuho Y."/>
            <person name="Yamashita R."/>
            <person name="Nakai K."/>
            <person name="Yada T."/>
            <person name="Nakamura Y."/>
            <person name="Ohara O."/>
            <person name="Isogai T."/>
            <person name="Sugano S."/>
        </authorList>
    </citation>
    <scope>NUCLEOTIDE SEQUENCE [LARGE SCALE MRNA]</scope>
</reference>
<reference key="2">
    <citation type="journal article" date="2005" name="Nature">
        <title>Generation and annotation of the DNA sequences of human chromosomes 2 and 4.</title>
        <authorList>
            <person name="Hillier L.W."/>
            <person name="Graves T.A."/>
            <person name="Fulton R.S."/>
            <person name="Fulton L.A."/>
            <person name="Pepin K.H."/>
            <person name="Minx P."/>
            <person name="Wagner-McPherson C."/>
            <person name="Layman D."/>
            <person name="Wylie K."/>
            <person name="Sekhon M."/>
            <person name="Becker M.C."/>
            <person name="Fewell G.A."/>
            <person name="Delehaunty K.D."/>
            <person name="Miner T.L."/>
            <person name="Nash W.E."/>
            <person name="Kremitzki C."/>
            <person name="Oddy L."/>
            <person name="Du H."/>
            <person name="Sun H."/>
            <person name="Bradshaw-Cordum H."/>
            <person name="Ali J."/>
            <person name="Carter J."/>
            <person name="Cordes M."/>
            <person name="Harris A."/>
            <person name="Isak A."/>
            <person name="van Brunt A."/>
            <person name="Nguyen C."/>
            <person name="Du F."/>
            <person name="Courtney L."/>
            <person name="Kalicki J."/>
            <person name="Ozersky P."/>
            <person name="Abbott S."/>
            <person name="Armstrong J."/>
            <person name="Belter E.A."/>
            <person name="Caruso L."/>
            <person name="Cedroni M."/>
            <person name="Cotton M."/>
            <person name="Davidson T."/>
            <person name="Desai A."/>
            <person name="Elliott G."/>
            <person name="Erb T."/>
            <person name="Fronick C."/>
            <person name="Gaige T."/>
            <person name="Haakenson W."/>
            <person name="Haglund K."/>
            <person name="Holmes A."/>
            <person name="Harkins R."/>
            <person name="Kim K."/>
            <person name="Kruchowski S.S."/>
            <person name="Strong C.M."/>
            <person name="Grewal N."/>
            <person name="Goyea E."/>
            <person name="Hou S."/>
            <person name="Levy A."/>
            <person name="Martinka S."/>
            <person name="Mead K."/>
            <person name="McLellan M.D."/>
            <person name="Meyer R."/>
            <person name="Randall-Maher J."/>
            <person name="Tomlinson C."/>
            <person name="Dauphin-Kohlberg S."/>
            <person name="Kozlowicz-Reilly A."/>
            <person name="Shah N."/>
            <person name="Swearengen-Shahid S."/>
            <person name="Snider J."/>
            <person name="Strong J.T."/>
            <person name="Thompson J."/>
            <person name="Yoakum M."/>
            <person name="Leonard S."/>
            <person name="Pearman C."/>
            <person name="Trani L."/>
            <person name="Radionenko M."/>
            <person name="Waligorski J.E."/>
            <person name="Wang C."/>
            <person name="Rock S.M."/>
            <person name="Tin-Wollam A.-M."/>
            <person name="Maupin R."/>
            <person name="Latreille P."/>
            <person name="Wendl M.C."/>
            <person name="Yang S.-P."/>
            <person name="Pohl C."/>
            <person name="Wallis J.W."/>
            <person name="Spieth J."/>
            <person name="Bieri T.A."/>
            <person name="Berkowicz N."/>
            <person name="Nelson J.O."/>
            <person name="Osborne J."/>
            <person name="Ding L."/>
            <person name="Meyer R."/>
            <person name="Sabo A."/>
            <person name="Shotland Y."/>
            <person name="Sinha P."/>
            <person name="Wohldmann P.E."/>
            <person name="Cook L.L."/>
            <person name="Hickenbotham M.T."/>
            <person name="Eldred J."/>
            <person name="Williams D."/>
            <person name="Jones T.A."/>
            <person name="She X."/>
            <person name="Ciccarelli F.D."/>
            <person name="Izaurralde E."/>
            <person name="Taylor J."/>
            <person name="Schmutz J."/>
            <person name="Myers R.M."/>
            <person name="Cox D.R."/>
            <person name="Huang X."/>
            <person name="McPherson J.D."/>
            <person name="Mardis E.R."/>
            <person name="Clifton S.W."/>
            <person name="Warren W.C."/>
            <person name="Chinwalla A.T."/>
            <person name="Eddy S.R."/>
            <person name="Marra M.A."/>
            <person name="Ovcharenko I."/>
            <person name="Furey T.S."/>
            <person name="Miller W."/>
            <person name="Eichler E.E."/>
            <person name="Bork P."/>
            <person name="Suyama M."/>
            <person name="Torrents D."/>
            <person name="Waterston R.H."/>
            <person name="Wilson R.K."/>
        </authorList>
    </citation>
    <scope>NUCLEOTIDE SEQUENCE [LARGE SCALE GENOMIC DNA]</scope>
</reference>
<reference key="3">
    <citation type="submission" date="2005-07" db="EMBL/GenBank/DDBJ databases">
        <authorList>
            <person name="Mural R.J."/>
            <person name="Istrail S."/>
            <person name="Sutton G.G."/>
            <person name="Florea L."/>
            <person name="Halpern A.L."/>
            <person name="Mobarry C.M."/>
            <person name="Lippert R."/>
            <person name="Walenz B."/>
            <person name="Shatkay H."/>
            <person name="Dew I."/>
            <person name="Miller J.R."/>
            <person name="Flanigan M.J."/>
            <person name="Edwards N.J."/>
            <person name="Bolanos R."/>
            <person name="Fasulo D."/>
            <person name="Halldorsson B.V."/>
            <person name="Hannenhalli S."/>
            <person name="Turner R."/>
            <person name="Yooseph S."/>
            <person name="Lu F."/>
            <person name="Nusskern D.R."/>
            <person name="Shue B.C."/>
            <person name="Zheng X.H."/>
            <person name="Zhong F."/>
            <person name="Delcher A.L."/>
            <person name="Huson D.H."/>
            <person name="Kravitz S.A."/>
            <person name="Mouchard L."/>
            <person name="Reinert K."/>
            <person name="Remington K.A."/>
            <person name="Clark A.G."/>
            <person name="Waterman M.S."/>
            <person name="Eichler E.E."/>
            <person name="Adams M.D."/>
            <person name="Hunkapiller M.W."/>
            <person name="Myers E.W."/>
            <person name="Venter J.C."/>
        </authorList>
    </citation>
    <scope>NUCLEOTIDE SEQUENCE [LARGE SCALE GENOMIC DNA]</scope>
</reference>
<reference key="4">
    <citation type="journal article" date="2004" name="Genome Res.">
        <title>The status, quality, and expansion of the NIH full-length cDNA project: the Mammalian Gene Collection (MGC).</title>
        <authorList>
            <consortium name="The MGC Project Team"/>
        </authorList>
    </citation>
    <scope>NUCLEOTIDE SEQUENCE [LARGE SCALE MRNA]</scope>
    <source>
        <tissue>Testis</tissue>
    </source>
</reference>
<reference key="5">
    <citation type="journal article" date="2011" name="BMC Syst. Biol.">
        <title>Initial characterization of the human central proteome.</title>
        <authorList>
            <person name="Burkard T.R."/>
            <person name="Planyavsky M."/>
            <person name="Kaupe I."/>
            <person name="Breitwieser F.P."/>
            <person name="Buerckstuemmer T."/>
            <person name="Bennett K.L."/>
            <person name="Superti-Furga G."/>
            <person name="Colinge J."/>
        </authorList>
    </citation>
    <scope>IDENTIFICATION BY MASS SPECTROMETRY [LARGE SCALE ANALYSIS]</scope>
</reference>
<reference key="6">
    <citation type="journal article" date="2021" name="J. Clin. Invest.">
        <title>C2orf69 mutations disrupt mitochondrial function and cause a multisystem human disorder with recurring autoinflammation.</title>
        <authorList>
            <person name="Lausberg E."/>
            <person name="Giesselmann S."/>
            <person name="Dewulf J.P."/>
            <person name="Wiame E."/>
            <person name="Holz A."/>
            <person name="Salvarinova R."/>
            <person name="van Karnebeek C.D."/>
            <person name="Klemm P."/>
            <person name="Ohl K."/>
            <person name="Mull M."/>
            <person name="Braunschweig T."/>
            <person name="Weis J."/>
            <person name="Sommer C.J."/>
            <person name="Demuth S."/>
            <person name="Haase C."/>
            <person name="Stollbrink-Peschgens C."/>
            <person name="Debray F.G."/>
            <person name="Libioulle C."/>
            <person name="Choukair D."/>
            <person name="Oommen P.T."/>
            <person name="Borkhardt A."/>
            <person name="Surowy H."/>
            <person name="Wieczorek D."/>
            <person name="Wagner N."/>
            <person name="Meyer R."/>
            <person name="Eggermann T."/>
            <person name="Begemann M."/>
            <person name="Van Schaftingen E."/>
            <person name="Haeusler M."/>
            <person name="Tenbrock K."/>
            <person name="van den Heuvel L."/>
            <person name="Elbracht M."/>
            <person name="Kurth I."/>
            <person name="Kraft F."/>
        </authorList>
    </citation>
    <scope>FUNCTION</scope>
    <scope>SUBCELLULAR LOCATION</scope>
    <scope>INVOLVEMENT IN COXPD53</scope>
    <scope>MUTAGENESIS OF 1-MET--ALA-24</scope>
</reference>
<comment type="function">
    <text evidence="2">May play a role in the respiratory chain.</text>
</comment>
<comment type="subcellular location">
    <subcellularLocation>
        <location evidence="2">Mitochondrion matrix</location>
    </subcellularLocation>
</comment>
<comment type="disease" evidence="2">
    <disease id="DI-06163">
        <name>Combined oxidative phosphorylation deficiency 53</name>
        <acronym>COXPD53</acronym>
        <description>An autosomal recessive mitochondrial disorder characterized by global developmental delay, hypomyelination, cerebral atrophy, microcephaly, liver dysfunction, and recurrent autoinflammation.</description>
        <dbReference type="MIM" id="619423"/>
    </disease>
    <text>The disease is caused by variants affecting the gene represented in this entry.</text>
</comment>
<comment type="similarity">
    <text evidence="3">Belongs to the C2orf69 family.</text>
</comment>
<comment type="sequence caution" evidence="3">
    <conflict type="erroneous gene model prediction">
        <sequence resource="EMBL-CDS" id="EAW70190"/>
    </conflict>
</comment>
<accession>Q8N8R5</accession>
<accession>Q8NE30</accession>
<proteinExistence type="evidence at protein level"/>
<keyword id="KW-0249">Electron transport</keyword>
<keyword id="KW-0496">Mitochondrion</keyword>
<keyword id="KW-1274">Primary mitochondrial disease</keyword>
<keyword id="KW-1267">Proteomics identification</keyword>
<keyword id="KW-1185">Reference proteome</keyword>
<keyword id="KW-0679">Respiratory chain</keyword>
<keyword id="KW-0809">Transit peptide</keyword>
<keyword id="KW-0813">Transport</keyword>
<feature type="transit peptide" description="Mitochondrion" evidence="1">
    <location>
        <begin position="1"/>
        <end position="24"/>
    </location>
</feature>
<feature type="chain" id="PRO_0000329088" description="Mitochondrial protein C2orf69">
    <location>
        <begin position="25"/>
        <end position="385"/>
    </location>
</feature>
<feature type="mutagenesis site" description="Abolishes mitochondrial localization." evidence="2">
    <location>
        <begin position="1"/>
        <end position="24"/>
    </location>
</feature>
<name>CB069_HUMAN</name>